<comment type="similarity">
    <text evidence="1">Belongs to the universal ribosomal protein uS9 family.</text>
</comment>
<gene>
    <name evidence="1" type="primary">rpsI</name>
    <name type="ordered locus">Pmob_0800</name>
</gene>
<protein>
    <recommendedName>
        <fullName evidence="1">Small ribosomal subunit protein uS9</fullName>
    </recommendedName>
    <alternativeName>
        <fullName evidence="2">30S ribosomal protein S9</fullName>
    </alternativeName>
</protein>
<organism>
    <name type="scientific">Petrotoga mobilis (strain DSM 10674 / SJ95)</name>
    <dbReference type="NCBI Taxonomy" id="403833"/>
    <lineage>
        <taxon>Bacteria</taxon>
        <taxon>Thermotogati</taxon>
        <taxon>Thermotogota</taxon>
        <taxon>Thermotogae</taxon>
        <taxon>Petrotogales</taxon>
        <taxon>Petrotogaceae</taxon>
        <taxon>Petrotoga</taxon>
    </lineage>
</organism>
<proteinExistence type="inferred from homology"/>
<keyword id="KW-0687">Ribonucleoprotein</keyword>
<keyword id="KW-0689">Ribosomal protein</keyword>
<accession>A9BHB5</accession>
<dbReference type="EMBL" id="CP000879">
    <property type="protein sequence ID" value="ABX31524.1"/>
    <property type="molecule type" value="Genomic_DNA"/>
</dbReference>
<dbReference type="RefSeq" id="WP_012208627.1">
    <property type="nucleotide sequence ID" value="NC_010003.1"/>
</dbReference>
<dbReference type="SMR" id="A9BHB5"/>
<dbReference type="STRING" id="403833.Pmob_0800"/>
<dbReference type="KEGG" id="pmo:Pmob_0800"/>
<dbReference type="eggNOG" id="COG0103">
    <property type="taxonomic scope" value="Bacteria"/>
</dbReference>
<dbReference type="HOGENOM" id="CLU_046483_2_1_0"/>
<dbReference type="OrthoDB" id="9803965at2"/>
<dbReference type="Proteomes" id="UP000000789">
    <property type="component" value="Chromosome"/>
</dbReference>
<dbReference type="GO" id="GO:0022627">
    <property type="term" value="C:cytosolic small ribosomal subunit"/>
    <property type="evidence" value="ECO:0007669"/>
    <property type="project" value="TreeGrafter"/>
</dbReference>
<dbReference type="GO" id="GO:0003723">
    <property type="term" value="F:RNA binding"/>
    <property type="evidence" value="ECO:0007669"/>
    <property type="project" value="TreeGrafter"/>
</dbReference>
<dbReference type="GO" id="GO:0003735">
    <property type="term" value="F:structural constituent of ribosome"/>
    <property type="evidence" value="ECO:0007669"/>
    <property type="project" value="InterPro"/>
</dbReference>
<dbReference type="GO" id="GO:0006412">
    <property type="term" value="P:translation"/>
    <property type="evidence" value="ECO:0007669"/>
    <property type="project" value="UniProtKB-UniRule"/>
</dbReference>
<dbReference type="FunFam" id="3.30.230.10:FF:000001">
    <property type="entry name" value="30S ribosomal protein S9"/>
    <property type="match status" value="1"/>
</dbReference>
<dbReference type="Gene3D" id="3.30.230.10">
    <property type="match status" value="1"/>
</dbReference>
<dbReference type="HAMAP" id="MF_00532_B">
    <property type="entry name" value="Ribosomal_uS9_B"/>
    <property type="match status" value="1"/>
</dbReference>
<dbReference type="InterPro" id="IPR020568">
    <property type="entry name" value="Ribosomal_Su5_D2-typ_SF"/>
</dbReference>
<dbReference type="InterPro" id="IPR000754">
    <property type="entry name" value="Ribosomal_uS9"/>
</dbReference>
<dbReference type="InterPro" id="IPR023035">
    <property type="entry name" value="Ribosomal_uS9_bac/plastid"/>
</dbReference>
<dbReference type="InterPro" id="IPR020574">
    <property type="entry name" value="Ribosomal_uS9_CS"/>
</dbReference>
<dbReference type="InterPro" id="IPR014721">
    <property type="entry name" value="Ribsml_uS5_D2-typ_fold_subgr"/>
</dbReference>
<dbReference type="NCBIfam" id="NF001099">
    <property type="entry name" value="PRK00132.1"/>
    <property type="match status" value="1"/>
</dbReference>
<dbReference type="PANTHER" id="PTHR21569">
    <property type="entry name" value="RIBOSOMAL PROTEIN S9"/>
    <property type="match status" value="1"/>
</dbReference>
<dbReference type="PANTHER" id="PTHR21569:SF1">
    <property type="entry name" value="SMALL RIBOSOMAL SUBUNIT PROTEIN US9M"/>
    <property type="match status" value="1"/>
</dbReference>
<dbReference type="Pfam" id="PF00380">
    <property type="entry name" value="Ribosomal_S9"/>
    <property type="match status" value="1"/>
</dbReference>
<dbReference type="SUPFAM" id="SSF54211">
    <property type="entry name" value="Ribosomal protein S5 domain 2-like"/>
    <property type="match status" value="1"/>
</dbReference>
<dbReference type="PROSITE" id="PS00360">
    <property type="entry name" value="RIBOSOMAL_S9"/>
    <property type="match status" value="1"/>
</dbReference>
<name>RS9_PETMO</name>
<reference key="1">
    <citation type="submission" date="2007-11" db="EMBL/GenBank/DDBJ databases">
        <title>Complete sequence of Petroga mobilis SJ95.</title>
        <authorList>
            <consortium name="US DOE Joint Genome Institute"/>
            <person name="Copeland A."/>
            <person name="Lucas S."/>
            <person name="Lapidus A."/>
            <person name="Barry K."/>
            <person name="Glavina del Rio T."/>
            <person name="Dalin E."/>
            <person name="Tice H."/>
            <person name="Pitluck S."/>
            <person name="Meincke L."/>
            <person name="Brettin T."/>
            <person name="Bruce D."/>
            <person name="Detter J.C."/>
            <person name="Han C."/>
            <person name="Kuske C.R."/>
            <person name="Schmutz J."/>
            <person name="Larimer F."/>
            <person name="Land M."/>
            <person name="Hauser L."/>
            <person name="Kyrpides N."/>
            <person name="Mikhailova N."/>
            <person name="Noll K."/>
            <person name="Richardson P."/>
        </authorList>
    </citation>
    <scope>NUCLEOTIDE SEQUENCE [LARGE SCALE GENOMIC DNA]</scope>
    <source>
        <strain>DSM 10674 / SJ95</strain>
    </source>
</reference>
<sequence>MAELIEYYGTGRRKTAVARVHLRPGNGKIKINGKEYKSLVEYLRGNEVWEIEALKPLTVTSTNGQFDLVIRVNGGGLSGQAGAIRLGIARALLSYDESFRPILKKEGLLTRDPREVERKKYGLRKARKRAQFSKR</sequence>
<feature type="chain" id="PRO_1000081825" description="Small ribosomal subunit protein uS9">
    <location>
        <begin position="1"/>
        <end position="135"/>
    </location>
</feature>
<evidence type="ECO:0000255" key="1">
    <source>
        <dbReference type="HAMAP-Rule" id="MF_00532"/>
    </source>
</evidence>
<evidence type="ECO:0000305" key="2"/>